<gene>
    <name evidence="1" type="primary">azoR</name>
    <name type="ordered locus">SPA1244</name>
</gene>
<reference key="1">
    <citation type="journal article" date="2004" name="Nat. Genet.">
        <title>Comparison of genome degradation in Paratyphi A and Typhi, human-restricted serovars of Salmonella enterica that cause typhoid.</title>
        <authorList>
            <person name="McClelland M."/>
            <person name="Sanderson K.E."/>
            <person name="Clifton S.W."/>
            <person name="Latreille P."/>
            <person name="Porwollik S."/>
            <person name="Sabo A."/>
            <person name="Meyer R."/>
            <person name="Bieri T."/>
            <person name="Ozersky P."/>
            <person name="McLellan M."/>
            <person name="Harkins C.R."/>
            <person name="Wang C."/>
            <person name="Nguyen C."/>
            <person name="Berghoff A."/>
            <person name="Elliott G."/>
            <person name="Kohlberg S."/>
            <person name="Strong C."/>
            <person name="Du F."/>
            <person name="Carter J."/>
            <person name="Kremizki C."/>
            <person name="Layman D."/>
            <person name="Leonard S."/>
            <person name="Sun H."/>
            <person name="Fulton L."/>
            <person name="Nash W."/>
            <person name="Miner T."/>
            <person name="Minx P."/>
            <person name="Delehaunty K."/>
            <person name="Fronick C."/>
            <person name="Magrini V."/>
            <person name="Nhan M."/>
            <person name="Warren W."/>
            <person name="Florea L."/>
            <person name="Spieth J."/>
            <person name="Wilson R.K."/>
        </authorList>
    </citation>
    <scope>NUCLEOTIDE SEQUENCE [LARGE SCALE GENOMIC DNA]</scope>
    <source>
        <strain>ATCC 9150 / SARB42</strain>
    </source>
</reference>
<organism>
    <name type="scientific">Salmonella paratyphi A (strain ATCC 9150 / SARB42)</name>
    <dbReference type="NCBI Taxonomy" id="295319"/>
    <lineage>
        <taxon>Bacteria</taxon>
        <taxon>Pseudomonadati</taxon>
        <taxon>Pseudomonadota</taxon>
        <taxon>Gammaproteobacteria</taxon>
        <taxon>Enterobacterales</taxon>
        <taxon>Enterobacteriaceae</taxon>
        <taxon>Salmonella</taxon>
    </lineage>
</organism>
<comment type="function">
    <text evidence="1">Quinone reductase that provides resistance to thiol-specific stress caused by electrophilic quinones.</text>
</comment>
<comment type="function">
    <text evidence="1">Also exhibits azoreductase activity. Catalyzes the reductive cleavage of the azo bond in aromatic azo compounds to the corresponding amines.</text>
</comment>
<comment type="catalytic activity">
    <reaction evidence="1">
        <text>2 a quinone + NADH + H(+) = 2 a 1,4-benzosemiquinone + NAD(+)</text>
        <dbReference type="Rhea" id="RHEA:65952"/>
        <dbReference type="ChEBI" id="CHEBI:15378"/>
        <dbReference type="ChEBI" id="CHEBI:57540"/>
        <dbReference type="ChEBI" id="CHEBI:57945"/>
        <dbReference type="ChEBI" id="CHEBI:132124"/>
        <dbReference type="ChEBI" id="CHEBI:134225"/>
    </reaction>
</comment>
<comment type="catalytic activity">
    <reaction evidence="1">
        <text>N,N-dimethyl-1,4-phenylenediamine + anthranilate + 2 NAD(+) = 2-(4-dimethylaminophenyl)diazenylbenzoate + 2 NADH + 2 H(+)</text>
        <dbReference type="Rhea" id="RHEA:55872"/>
        <dbReference type="ChEBI" id="CHEBI:15378"/>
        <dbReference type="ChEBI" id="CHEBI:15783"/>
        <dbReference type="ChEBI" id="CHEBI:16567"/>
        <dbReference type="ChEBI" id="CHEBI:57540"/>
        <dbReference type="ChEBI" id="CHEBI:57945"/>
        <dbReference type="ChEBI" id="CHEBI:71579"/>
        <dbReference type="EC" id="1.7.1.17"/>
    </reaction>
</comment>
<comment type="cofactor">
    <cofactor evidence="1">
        <name>FMN</name>
        <dbReference type="ChEBI" id="CHEBI:58210"/>
    </cofactor>
    <text evidence="1">Binds 1 FMN per subunit.</text>
</comment>
<comment type="subunit">
    <text evidence="1">Homodimer.</text>
</comment>
<comment type="similarity">
    <text evidence="1">Belongs to the azoreductase type 1 family.</text>
</comment>
<name>AZOR_SALPA</name>
<accession>Q5PHS8</accession>
<feature type="chain" id="PRO_0000245968" description="FMN-dependent NADH:quinone oxidoreductase">
    <location>
        <begin position="1"/>
        <end position="201"/>
    </location>
</feature>
<feature type="binding site" evidence="1">
    <location>
        <position position="10"/>
    </location>
    <ligand>
        <name>FMN</name>
        <dbReference type="ChEBI" id="CHEBI:58210"/>
    </ligand>
</feature>
<feature type="binding site" evidence="1">
    <location>
        <begin position="16"/>
        <end position="18"/>
    </location>
    <ligand>
        <name>FMN</name>
        <dbReference type="ChEBI" id="CHEBI:58210"/>
    </ligand>
</feature>
<feature type="binding site" evidence="1">
    <location>
        <begin position="96"/>
        <end position="99"/>
    </location>
    <ligand>
        <name>FMN</name>
        <dbReference type="ChEBI" id="CHEBI:58210"/>
    </ligand>
</feature>
<feature type="binding site" evidence="1">
    <location>
        <begin position="140"/>
        <end position="143"/>
    </location>
    <ligand>
        <name>FMN</name>
        <dbReference type="ChEBI" id="CHEBI:58210"/>
    </ligand>
</feature>
<proteinExistence type="inferred from homology"/>
<evidence type="ECO:0000255" key="1">
    <source>
        <dbReference type="HAMAP-Rule" id="MF_01216"/>
    </source>
</evidence>
<sequence length="201" mass="21628">MSKVLVLKSSILAGYSQSGQLTDYFIEQWREKHVADEITVRDLAANPVPVLDGELVGAMRPGDAPLTPRQQDALALSDELIAELKAHDVIVIAAPMYNFNIPTQLKNYFDLIARAGITFRYTEKGPEGLVTGKRAVVLSSRGGIHKDTPTDLIAPYLKVFLGFIGITDVNFVFAEGIAYGPEVAAKAQADAKAAIDSVVAA</sequence>
<protein>
    <recommendedName>
        <fullName evidence="1">FMN-dependent NADH:quinone oxidoreductase</fullName>
        <ecNumber evidence="1">1.6.5.-</ecNumber>
    </recommendedName>
    <alternativeName>
        <fullName evidence="1">Azo-dye reductase</fullName>
    </alternativeName>
    <alternativeName>
        <fullName evidence="1">FMN-dependent NADH-azo compound oxidoreductase</fullName>
    </alternativeName>
    <alternativeName>
        <fullName evidence="1">FMN-dependent NADH-azoreductase</fullName>
        <ecNumber evidence="1">1.7.1.17</ecNumber>
    </alternativeName>
</protein>
<dbReference type="EC" id="1.6.5.-" evidence="1"/>
<dbReference type="EC" id="1.7.1.17" evidence="1"/>
<dbReference type="EMBL" id="CP000026">
    <property type="protein sequence ID" value="AAV77195.1"/>
    <property type="molecule type" value="Genomic_DNA"/>
</dbReference>
<dbReference type="RefSeq" id="WP_000048924.1">
    <property type="nucleotide sequence ID" value="NC_006511.1"/>
</dbReference>
<dbReference type="SMR" id="Q5PHS8"/>
<dbReference type="KEGG" id="spt:SPA1244"/>
<dbReference type="HOGENOM" id="CLU_088964_0_0_6"/>
<dbReference type="Proteomes" id="UP000008185">
    <property type="component" value="Chromosome"/>
</dbReference>
<dbReference type="GO" id="GO:0009055">
    <property type="term" value="F:electron transfer activity"/>
    <property type="evidence" value="ECO:0007669"/>
    <property type="project" value="UniProtKB-UniRule"/>
</dbReference>
<dbReference type="GO" id="GO:0010181">
    <property type="term" value="F:FMN binding"/>
    <property type="evidence" value="ECO:0007669"/>
    <property type="project" value="UniProtKB-UniRule"/>
</dbReference>
<dbReference type="GO" id="GO:0016652">
    <property type="term" value="F:oxidoreductase activity, acting on NAD(P)H as acceptor"/>
    <property type="evidence" value="ECO:0007669"/>
    <property type="project" value="UniProtKB-UniRule"/>
</dbReference>
<dbReference type="GO" id="GO:0016655">
    <property type="term" value="F:oxidoreductase activity, acting on NAD(P)H, quinone or similar compound as acceptor"/>
    <property type="evidence" value="ECO:0007669"/>
    <property type="project" value="InterPro"/>
</dbReference>
<dbReference type="FunFam" id="3.40.50.360:FF:000010">
    <property type="entry name" value="FMN-dependent NADH-azoreductase"/>
    <property type="match status" value="1"/>
</dbReference>
<dbReference type="Gene3D" id="3.40.50.360">
    <property type="match status" value="1"/>
</dbReference>
<dbReference type="HAMAP" id="MF_01216">
    <property type="entry name" value="Azoreductase_type1"/>
    <property type="match status" value="1"/>
</dbReference>
<dbReference type="InterPro" id="IPR003680">
    <property type="entry name" value="Flavodoxin_fold"/>
</dbReference>
<dbReference type="InterPro" id="IPR029039">
    <property type="entry name" value="Flavoprotein-like_sf"/>
</dbReference>
<dbReference type="InterPro" id="IPR050104">
    <property type="entry name" value="FMN-dep_NADH:Q_OxRdtase_AzoR1"/>
</dbReference>
<dbReference type="InterPro" id="IPR023048">
    <property type="entry name" value="NADH:quinone_OxRdtase_FMN_depd"/>
</dbReference>
<dbReference type="PANTHER" id="PTHR43741">
    <property type="entry name" value="FMN-DEPENDENT NADH-AZOREDUCTASE 1"/>
    <property type="match status" value="1"/>
</dbReference>
<dbReference type="PANTHER" id="PTHR43741:SF2">
    <property type="entry name" value="FMN-DEPENDENT NADH:QUINONE OXIDOREDUCTASE"/>
    <property type="match status" value="1"/>
</dbReference>
<dbReference type="Pfam" id="PF02525">
    <property type="entry name" value="Flavodoxin_2"/>
    <property type="match status" value="1"/>
</dbReference>
<dbReference type="SUPFAM" id="SSF52218">
    <property type="entry name" value="Flavoproteins"/>
    <property type="match status" value="1"/>
</dbReference>
<keyword id="KW-0285">Flavoprotein</keyword>
<keyword id="KW-0288">FMN</keyword>
<keyword id="KW-0520">NAD</keyword>
<keyword id="KW-0560">Oxidoreductase</keyword>